<reference key="1">
    <citation type="journal article" date="2001" name="Nature">
        <title>Complete genome sequence of Salmonella enterica serovar Typhimurium LT2.</title>
        <authorList>
            <person name="McClelland M."/>
            <person name="Sanderson K.E."/>
            <person name="Spieth J."/>
            <person name="Clifton S.W."/>
            <person name="Latreille P."/>
            <person name="Courtney L."/>
            <person name="Porwollik S."/>
            <person name="Ali J."/>
            <person name="Dante M."/>
            <person name="Du F."/>
            <person name="Hou S."/>
            <person name="Layman D."/>
            <person name="Leonard S."/>
            <person name="Nguyen C."/>
            <person name="Scott K."/>
            <person name="Holmes A."/>
            <person name="Grewal N."/>
            <person name="Mulvaney E."/>
            <person name="Ryan E."/>
            <person name="Sun H."/>
            <person name="Florea L."/>
            <person name="Miller W."/>
            <person name="Stoneking T."/>
            <person name="Nhan M."/>
            <person name="Waterston R."/>
            <person name="Wilson R.K."/>
        </authorList>
    </citation>
    <scope>NUCLEOTIDE SEQUENCE [LARGE SCALE GENOMIC DNA]</scope>
    <source>
        <strain>LT2 / SGSC1412 / ATCC 700720</strain>
    </source>
</reference>
<feature type="chain" id="PRO_0000209437" description="Co-chaperone protein DjlA">
    <location>
        <begin position="1"/>
        <end position="270"/>
    </location>
</feature>
<feature type="topological domain" description="Periplasmic" evidence="1">
    <location>
        <begin position="1"/>
        <end position="6"/>
    </location>
</feature>
<feature type="transmembrane region" description="Helical" evidence="1">
    <location>
        <begin position="7"/>
        <end position="31"/>
    </location>
</feature>
<feature type="topological domain" description="Cytoplasmic" evidence="1">
    <location>
        <begin position="32"/>
        <end position="270"/>
    </location>
</feature>
<feature type="domain" description="J" evidence="1">
    <location>
        <begin position="204"/>
        <end position="270"/>
    </location>
</feature>
<protein>
    <recommendedName>
        <fullName evidence="1">Co-chaperone protein DjlA</fullName>
    </recommendedName>
</protein>
<keyword id="KW-0997">Cell inner membrane</keyword>
<keyword id="KW-1003">Cell membrane</keyword>
<keyword id="KW-0143">Chaperone</keyword>
<keyword id="KW-0472">Membrane</keyword>
<keyword id="KW-1185">Reference proteome</keyword>
<keyword id="KW-0812">Transmembrane</keyword>
<keyword id="KW-1133">Transmembrane helix</keyword>
<accession>Q7CR86</accession>
<gene>
    <name evidence="1" type="primary">djlA</name>
    <name type="ordered locus">STM0094</name>
</gene>
<comment type="function">
    <text evidence="1">Regulatory DnaK co-chaperone. Direct interaction between DnaK and DjlA is needed for the induction of the wcaABCDE operon, involved in the synthesis of a colanic acid polysaccharide capsule, possibly through activation of the RcsB/RcsC phosphotransfer signaling pathway. The colanic acid capsule may help the bacterium survive conditions outside the host.</text>
</comment>
<comment type="subunit">
    <text evidence="1">Homodimer.</text>
</comment>
<comment type="subcellular location">
    <subcellularLocation>
        <location evidence="1">Cell inner membrane</location>
        <topology evidence="1">Single-pass type III membrane protein</topology>
    </subcellularLocation>
</comment>
<comment type="domain">
    <text evidence="1">The transmembrane domain is a dimerization domain.</text>
</comment>
<organism>
    <name type="scientific">Salmonella typhimurium (strain LT2 / SGSC1412 / ATCC 700720)</name>
    <dbReference type="NCBI Taxonomy" id="99287"/>
    <lineage>
        <taxon>Bacteria</taxon>
        <taxon>Pseudomonadati</taxon>
        <taxon>Pseudomonadota</taxon>
        <taxon>Gammaproteobacteria</taxon>
        <taxon>Enterobacterales</taxon>
        <taxon>Enterobacteriaceae</taxon>
        <taxon>Salmonella</taxon>
    </lineage>
</organism>
<name>DJLA_SALTY</name>
<proteinExistence type="inferred from homology"/>
<sequence>MQYWGKIIGVAVALMMGGGFWGVVLGLLVGHMFDKARSRKMAWFANQRERQALFFATTFEVMGHLTKSKGRVTEADIHIASQLMDRMNLHGDSRTAAQNAFRVGKADNYPLREKMRQFRSVCFGRFDLIRMFLEIQIQAAFADGSLHPNEREVLYVIAEELGISRVQFDQFLRMMQGGAQFGGGYHQQSGGGWQQAQRGPTLEDACNVLGVKTTDDATTIKRAYRKLMSEHHPDKLVAKGLPPEMMEMAKQKAQEIQKAYELIKEQKGFK</sequence>
<evidence type="ECO:0000255" key="1">
    <source>
        <dbReference type="HAMAP-Rule" id="MF_01153"/>
    </source>
</evidence>
<dbReference type="EMBL" id="AE006468">
    <property type="protein sequence ID" value="AAL19058.1"/>
    <property type="molecule type" value="Genomic_DNA"/>
</dbReference>
<dbReference type="RefSeq" id="NP_459099.1">
    <property type="nucleotide sequence ID" value="NC_003197.2"/>
</dbReference>
<dbReference type="RefSeq" id="WP_001200595.1">
    <property type="nucleotide sequence ID" value="NC_003197.2"/>
</dbReference>
<dbReference type="SMR" id="Q7CR86"/>
<dbReference type="STRING" id="99287.STM0094"/>
<dbReference type="PaxDb" id="99287-STM0094"/>
<dbReference type="DNASU" id="1251612"/>
<dbReference type="GeneID" id="1251612"/>
<dbReference type="KEGG" id="stm:STM0094"/>
<dbReference type="PATRIC" id="fig|99287.12.peg.98"/>
<dbReference type="HOGENOM" id="CLU_066221_1_0_6"/>
<dbReference type="OMA" id="MQYWGKL"/>
<dbReference type="PhylomeDB" id="Q7CR86"/>
<dbReference type="BioCyc" id="SENT99287:STM0094-MONOMER"/>
<dbReference type="Proteomes" id="UP000001014">
    <property type="component" value="Chromosome"/>
</dbReference>
<dbReference type="GO" id="GO:0005886">
    <property type="term" value="C:plasma membrane"/>
    <property type="evidence" value="ECO:0007669"/>
    <property type="project" value="UniProtKB-SubCell"/>
</dbReference>
<dbReference type="GO" id="GO:0051087">
    <property type="term" value="F:protein-folding chaperone binding"/>
    <property type="evidence" value="ECO:0007669"/>
    <property type="project" value="InterPro"/>
</dbReference>
<dbReference type="CDD" id="cd06257">
    <property type="entry name" value="DnaJ"/>
    <property type="match status" value="1"/>
</dbReference>
<dbReference type="CDD" id="cd07316">
    <property type="entry name" value="terB_like_DjlA"/>
    <property type="match status" value="1"/>
</dbReference>
<dbReference type="FunFam" id="1.10.287.110:FF:000011">
    <property type="entry name" value="Co-chaperone protein DjlA"/>
    <property type="match status" value="1"/>
</dbReference>
<dbReference type="FunFam" id="1.10.3680.10:FF:000001">
    <property type="entry name" value="Co-chaperone protein DjlA"/>
    <property type="match status" value="1"/>
</dbReference>
<dbReference type="Gene3D" id="1.10.287.110">
    <property type="entry name" value="DnaJ domain"/>
    <property type="match status" value="1"/>
</dbReference>
<dbReference type="Gene3D" id="1.10.3680.10">
    <property type="entry name" value="TerB-like"/>
    <property type="match status" value="1"/>
</dbReference>
<dbReference type="HAMAP" id="MF_01153">
    <property type="entry name" value="DjlA"/>
    <property type="match status" value="1"/>
</dbReference>
<dbReference type="InterPro" id="IPR023749">
    <property type="entry name" value="DjlA"/>
</dbReference>
<dbReference type="InterPro" id="IPR050817">
    <property type="entry name" value="DjlA_DnaK_co-chaperone"/>
</dbReference>
<dbReference type="InterPro" id="IPR007791">
    <property type="entry name" value="DjlA_N"/>
</dbReference>
<dbReference type="InterPro" id="IPR001623">
    <property type="entry name" value="DnaJ_domain"/>
</dbReference>
<dbReference type="InterPro" id="IPR036869">
    <property type="entry name" value="J_dom_sf"/>
</dbReference>
<dbReference type="InterPro" id="IPR029024">
    <property type="entry name" value="TerB-like"/>
</dbReference>
<dbReference type="NCBIfam" id="NF006948">
    <property type="entry name" value="PRK09430.1"/>
    <property type="match status" value="1"/>
</dbReference>
<dbReference type="PANTHER" id="PTHR24074">
    <property type="entry name" value="CO-CHAPERONE PROTEIN DJLA"/>
    <property type="match status" value="1"/>
</dbReference>
<dbReference type="Pfam" id="PF00226">
    <property type="entry name" value="DnaJ"/>
    <property type="match status" value="1"/>
</dbReference>
<dbReference type="Pfam" id="PF05099">
    <property type="entry name" value="TerB"/>
    <property type="match status" value="1"/>
</dbReference>
<dbReference type="PRINTS" id="PR00625">
    <property type="entry name" value="JDOMAIN"/>
</dbReference>
<dbReference type="SMART" id="SM00271">
    <property type="entry name" value="DnaJ"/>
    <property type="match status" value="1"/>
</dbReference>
<dbReference type="SUPFAM" id="SSF46565">
    <property type="entry name" value="Chaperone J-domain"/>
    <property type="match status" value="1"/>
</dbReference>
<dbReference type="PROSITE" id="PS50076">
    <property type="entry name" value="DNAJ_2"/>
    <property type="match status" value="1"/>
</dbReference>